<organism>
    <name type="scientific">Bacillus anthracis (strain CDC 684 / NRRL 3495)</name>
    <dbReference type="NCBI Taxonomy" id="568206"/>
    <lineage>
        <taxon>Bacteria</taxon>
        <taxon>Bacillati</taxon>
        <taxon>Bacillota</taxon>
        <taxon>Bacilli</taxon>
        <taxon>Bacillales</taxon>
        <taxon>Bacillaceae</taxon>
        <taxon>Bacillus</taxon>
        <taxon>Bacillus cereus group</taxon>
    </lineage>
</organism>
<feature type="chain" id="PRO_1000185023" description="Small, acid-soluble spore protein K">
    <location>
        <begin position="1"/>
        <end position="52"/>
    </location>
</feature>
<feature type="region of interest" description="Disordered" evidence="2">
    <location>
        <begin position="1"/>
        <end position="52"/>
    </location>
</feature>
<keyword id="KW-0749">Sporulation</keyword>
<proteinExistence type="inferred from homology"/>
<sequence length="52" mass="5946">MGKQAEFWSESKNNSKIDGQPKAKSRFASKRPNGTINTHPQERMRAANQQEE</sequence>
<evidence type="ECO:0000255" key="1">
    <source>
        <dbReference type="HAMAP-Rule" id="MF_01504"/>
    </source>
</evidence>
<evidence type="ECO:0000256" key="2">
    <source>
        <dbReference type="SAM" id="MobiDB-lite"/>
    </source>
</evidence>
<accession>C3LHB3</accession>
<name>SSPK_BACAC</name>
<reference key="1">
    <citation type="submission" date="2008-10" db="EMBL/GenBank/DDBJ databases">
        <title>Genome sequence of Bacillus anthracis str. CDC 684.</title>
        <authorList>
            <person name="Dodson R.J."/>
            <person name="Munk A.C."/>
            <person name="Brettin T."/>
            <person name="Bruce D."/>
            <person name="Detter C."/>
            <person name="Tapia R."/>
            <person name="Han C."/>
            <person name="Sutton G."/>
            <person name="Sims D."/>
        </authorList>
    </citation>
    <scope>NUCLEOTIDE SEQUENCE [LARGE SCALE GENOMIC DNA]</scope>
    <source>
        <strain>CDC 684 / NRRL 3495</strain>
    </source>
</reference>
<protein>
    <recommendedName>
        <fullName evidence="1">Small, acid-soluble spore protein K</fullName>
        <shortName evidence="1">SASP K</shortName>
    </recommendedName>
</protein>
<dbReference type="EMBL" id="CP001215">
    <property type="protein sequence ID" value="ACP12804.1"/>
    <property type="molecule type" value="Genomic_DNA"/>
</dbReference>
<dbReference type="RefSeq" id="WP_000517891.1">
    <property type="nucleotide sequence ID" value="NC_012581.1"/>
</dbReference>
<dbReference type="KEGG" id="bah:BAMEG_4087"/>
<dbReference type="HOGENOM" id="CLU_3076423_0_0_9"/>
<dbReference type="GO" id="GO:0042601">
    <property type="term" value="C:endospore-forming forespore"/>
    <property type="evidence" value="ECO:0007669"/>
    <property type="project" value="InterPro"/>
</dbReference>
<dbReference type="GO" id="GO:0030436">
    <property type="term" value="P:asexual sporulation"/>
    <property type="evidence" value="ECO:0007669"/>
    <property type="project" value="UniProtKB-UniRule"/>
</dbReference>
<dbReference type="GO" id="GO:0030435">
    <property type="term" value="P:sporulation resulting in formation of a cellular spore"/>
    <property type="evidence" value="ECO:0007669"/>
    <property type="project" value="UniProtKB-KW"/>
</dbReference>
<dbReference type="HAMAP" id="MF_01504">
    <property type="entry name" value="SspK"/>
    <property type="match status" value="1"/>
</dbReference>
<dbReference type="InterPro" id="IPR012611">
    <property type="entry name" value="SASP_SspK"/>
</dbReference>
<dbReference type="NCBIfam" id="NF002843">
    <property type="entry name" value="PRK03081.1"/>
    <property type="match status" value="1"/>
</dbReference>
<dbReference type="NCBIfam" id="TIGR03091">
    <property type="entry name" value="SASP_sspK"/>
    <property type="match status" value="1"/>
</dbReference>
<dbReference type="Pfam" id="PF08176">
    <property type="entry name" value="SspK"/>
    <property type="match status" value="1"/>
</dbReference>
<comment type="subcellular location">
    <subcellularLocation>
        <location evidence="1">Spore core</location>
    </subcellularLocation>
</comment>
<comment type="induction">
    <text evidence="1">Expressed only in the forespore compartment of sporulating cells.</text>
</comment>
<comment type="similarity">
    <text evidence="1">Belongs to the SspK family.</text>
</comment>
<gene>
    <name evidence="1" type="primary">sspK</name>
    <name type="ordered locus">BAMEG_4087</name>
</gene>